<proteinExistence type="inferred from homology"/>
<evidence type="ECO:0000255" key="1">
    <source>
        <dbReference type="HAMAP-Rule" id="MF_00235"/>
    </source>
</evidence>
<protein>
    <recommendedName>
        <fullName evidence="1">Adenylate kinase</fullName>
        <shortName evidence="1">AK</shortName>
        <ecNumber evidence="1">2.7.4.3</ecNumber>
    </recommendedName>
    <alternativeName>
        <fullName evidence="1">ATP-AMP transphosphorylase</fullName>
    </alternativeName>
    <alternativeName>
        <fullName evidence="1">ATP:AMP phosphotransferase</fullName>
    </alternativeName>
    <alternativeName>
        <fullName evidence="1">Adenylate monophosphate kinase</fullName>
    </alternativeName>
</protein>
<organism>
    <name type="scientific">Caulobacter sp. (strain K31)</name>
    <dbReference type="NCBI Taxonomy" id="366602"/>
    <lineage>
        <taxon>Bacteria</taxon>
        <taxon>Pseudomonadati</taxon>
        <taxon>Pseudomonadota</taxon>
        <taxon>Alphaproteobacteria</taxon>
        <taxon>Caulobacterales</taxon>
        <taxon>Caulobacteraceae</taxon>
        <taxon>Caulobacter</taxon>
    </lineage>
</organism>
<accession>B0T2E3</accession>
<name>KAD_CAUSK</name>
<sequence length="189" mass="20213">MNLILFGPPAAGKGTQAKRLVEQRGMVQLSTGDMLRAAIASGSELGQKVKGVLDRGELVTDEIVIALIEDRLPEAEAAGGAIFDGFPRTVPQAQALDAMLARRGQKIDSVLRLKVDEPALIERISKRFAEQGRPDDNPEVFVTRLAAYNAQTAPLLPYYREQGKLTELDGMASVETVAGSIDAALSVVA</sequence>
<feature type="chain" id="PRO_1000078266" description="Adenylate kinase">
    <location>
        <begin position="1"/>
        <end position="189"/>
    </location>
</feature>
<feature type="region of interest" description="NMP" evidence="1">
    <location>
        <begin position="30"/>
        <end position="59"/>
    </location>
</feature>
<feature type="region of interest" description="LID" evidence="1">
    <location>
        <begin position="126"/>
        <end position="136"/>
    </location>
</feature>
<feature type="binding site" evidence="1">
    <location>
        <begin position="10"/>
        <end position="15"/>
    </location>
    <ligand>
        <name>ATP</name>
        <dbReference type="ChEBI" id="CHEBI:30616"/>
    </ligand>
</feature>
<feature type="binding site" evidence="1">
    <location>
        <position position="31"/>
    </location>
    <ligand>
        <name>AMP</name>
        <dbReference type="ChEBI" id="CHEBI:456215"/>
    </ligand>
</feature>
<feature type="binding site" evidence="1">
    <location>
        <position position="36"/>
    </location>
    <ligand>
        <name>AMP</name>
        <dbReference type="ChEBI" id="CHEBI:456215"/>
    </ligand>
</feature>
<feature type="binding site" evidence="1">
    <location>
        <begin position="57"/>
        <end position="59"/>
    </location>
    <ligand>
        <name>AMP</name>
        <dbReference type="ChEBI" id="CHEBI:456215"/>
    </ligand>
</feature>
<feature type="binding site" evidence="1">
    <location>
        <begin position="85"/>
        <end position="88"/>
    </location>
    <ligand>
        <name>AMP</name>
        <dbReference type="ChEBI" id="CHEBI:456215"/>
    </ligand>
</feature>
<feature type="binding site" evidence="1">
    <location>
        <position position="92"/>
    </location>
    <ligand>
        <name>AMP</name>
        <dbReference type="ChEBI" id="CHEBI:456215"/>
    </ligand>
</feature>
<feature type="binding site" evidence="1">
    <location>
        <position position="127"/>
    </location>
    <ligand>
        <name>ATP</name>
        <dbReference type="ChEBI" id="CHEBI:30616"/>
    </ligand>
</feature>
<feature type="binding site" evidence="1">
    <location>
        <position position="133"/>
    </location>
    <ligand>
        <name>AMP</name>
        <dbReference type="ChEBI" id="CHEBI:456215"/>
    </ligand>
</feature>
<feature type="binding site" evidence="1">
    <location>
        <position position="144"/>
    </location>
    <ligand>
        <name>AMP</name>
        <dbReference type="ChEBI" id="CHEBI:456215"/>
    </ligand>
</feature>
<feature type="binding site" evidence="1">
    <location>
        <position position="172"/>
    </location>
    <ligand>
        <name>ATP</name>
        <dbReference type="ChEBI" id="CHEBI:30616"/>
    </ligand>
</feature>
<dbReference type="EC" id="2.7.4.3" evidence="1"/>
<dbReference type="EMBL" id="CP000927">
    <property type="protein sequence ID" value="ABZ70764.1"/>
    <property type="molecule type" value="Genomic_DNA"/>
</dbReference>
<dbReference type="SMR" id="B0T2E3"/>
<dbReference type="STRING" id="366602.Caul_1635"/>
<dbReference type="KEGG" id="cak:Caul_1635"/>
<dbReference type="eggNOG" id="COG0563">
    <property type="taxonomic scope" value="Bacteria"/>
</dbReference>
<dbReference type="HOGENOM" id="CLU_032354_4_1_5"/>
<dbReference type="OrthoDB" id="9805030at2"/>
<dbReference type="UniPathway" id="UPA00588">
    <property type="reaction ID" value="UER00649"/>
</dbReference>
<dbReference type="GO" id="GO:0005737">
    <property type="term" value="C:cytoplasm"/>
    <property type="evidence" value="ECO:0007669"/>
    <property type="project" value="UniProtKB-SubCell"/>
</dbReference>
<dbReference type="GO" id="GO:0004017">
    <property type="term" value="F:adenylate kinase activity"/>
    <property type="evidence" value="ECO:0007669"/>
    <property type="project" value="UniProtKB-UniRule"/>
</dbReference>
<dbReference type="GO" id="GO:0005524">
    <property type="term" value="F:ATP binding"/>
    <property type="evidence" value="ECO:0007669"/>
    <property type="project" value="UniProtKB-UniRule"/>
</dbReference>
<dbReference type="GO" id="GO:0044209">
    <property type="term" value="P:AMP salvage"/>
    <property type="evidence" value="ECO:0007669"/>
    <property type="project" value="UniProtKB-UniRule"/>
</dbReference>
<dbReference type="CDD" id="cd01428">
    <property type="entry name" value="ADK"/>
    <property type="match status" value="1"/>
</dbReference>
<dbReference type="Gene3D" id="3.40.50.300">
    <property type="entry name" value="P-loop containing nucleotide triphosphate hydrolases"/>
    <property type="match status" value="1"/>
</dbReference>
<dbReference type="HAMAP" id="MF_00235">
    <property type="entry name" value="Adenylate_kinase_Adk"/>
    <property type="match status" value="1"/>
</dbReference>
<dbReference type="InterPro" id="IPR000850">
    <property type="entry name" value="Adenylat/UMP-CMP_kin"/>
</dbReference>
<dbReference type="InterPro" id="IPR033690">
    <property type="entry name" value="Adenylat_kinase_CS"/>
</dbReference>
<dbReference type="InterPro" id="IPR027417">
    <property type="entry name" value="P-loop_NTPase"/>
</dbReference>
<dbReference type="NCBIfam" id="NF001381">
    <property type="entry name" value="PRK00279.1-3"/>
    <property type="match status" value="1"/>
</dbReference>
<dbReference type="NCBIfam" id="NF011100">
    <property type="entry name" value="PRK14527.1"/>
    <property type="match status" value="1"/>
</dbReference>
<dbReference type="NCBIfam" id="NF011104">
    <property type="entry name" value="PRK14531.1"/>
    <property type="match status" value="1"/>
</dbReference>
<dbReference type="NCBIfam" id="NF011105">
    <property type="entry name" value="PRK14532.1"/>
    <property type="match status" value="1"/>
</dbReference>
<dbReference type="PANTHER" id="PTHR23359">
    <property type="entry name" value="NUCLEOTIDE KINASE"/>
    <property type="match status" value="1"/>
</dbReference>
<dbReference type="Pfam" id="PF00406">
    <property type="entry name" value="ADK"/>
    <property type="match status" value="1"/>
</dbReference>
<dbReference type="PRINTS" id="PR00094">
    <property type="entry name" value="ADENYLTKNASE"/>
</dbReference>
<dbReference type="SUPFAM" id="SSF52540">
    <property type="entry name" value="P-loop containing nucleoside triphosphate hydrolases"/>
    <property type="match status" value="1"/>
</dbReference>
<dbReference type="PROSITE" id="PS00113">
    <property type="entry name" value="ADENYLATE_KINASE"/>
    <property type="match status" value="1"/>
</dbReference>
<reference key="1">
    <citation type="submission" date="2008-01" db="EMBL/GenBank/DDBJ databases">
        <title>Complete sequence of chromosome of Caulobacter sp. K31.</title>
        <authorList>
            <consortium name="US DOE Joint Genome Institute"/>
            <person name="Copeland A."/>
            <person name="Lucas S."/>
            <person name="Lapidus A."/>
            <person name="Barry K."/>
            <person name="Glavina del Rio T."/>
            <person name="Dalin E."/>
            <person name="Tice H."/>
            <person name="Pitluck S."/>
            <person name="Bruce D."/>
            <person name="Goodwin L."/>
            <person name="Thompson L.S."/>
            <person name="Brettin T."/>
            <person name="Detter J.C."/>
            <person name="Han C."/>
            <person name="Schmutz J."/>
            <person name="Larimer F."/>
            <person name="Land M."/>
            <person name="Hauser L."/>
            <person name="Kyrpides N."/>
            <person name="Kim E."/>
            <person name="Stephens C."/>
            <person name="Richardson P."/>
        </authorList>
    </citation>
    <scope>NUCLEOTIDE SEQUENCE [LARGE SCALE GENOMIC DNA]</scope>
    <source>
        <strain>K31</strain>
    </source>
</reference>
<keyword id="KW-0067">ATP-binding</keyword>
<keyword id="KW-0963">Cytoplasm</keyword>
<keyword id="KW-0418">Kinase</keyword>
<keyword id="KW-0545">Nucleotide biosynthesis</keyword>
<keyword id="KW-0547">Nucleotide-binding</keyword>
<keyword id="KW-0808">Transferase</keyword>
<gene>
    <name evidence="1" type="primary">adk</name>
    <name type="ordered locus">Caul_1635</name>
</gene>
<comment type="function">
    <text evidence="1">Catalyzes the reversible transfer of the terminal phosphate group between ATP and AMP. Plays an important role in cellular energy homeostasis and in adenine nucleotide metabolism.</text>
</comment>
<comment type="catalytic activity">
    <reaction evidence="1">
        <text>AMP + ATP = 2 ADP</text>
        <dbReference type="Rhea" id="RHEA:12973"/>
        <dbReference type="ChEBI" id="CHEBI:30616"/>
        <dbReference type="ChEBI" id="CHEBI:456215"/>
        <dbReference type="ChEBI" id="CHEBI:456216"/>
        <dbReference type="EC" id="2.7.4.3"/>
    </reaction>
</comment>
<comment type="pathway">
    <text evidence="1">Purine metabolism; AMP biosynthesis via salvage pathway; AMP from ADP: step 1/1.</text>
</comment>
<comment type="subunit">
    <text evidence="1">Monomer.</text>
</comment>
<comment type="subcellular location">
    <subcellularLocation>
        <location evidence="1">Cytoplasm</location>
    </subcellularLocation>
</comment>
<comment type="domain">
    <text evidence="1">Consists of three domains, a large central CORE domain and two small peripheral domains, NMPbind and LID, which undergo movements during catalysis. The LID domain closes over the site of phosphoryl transfer upon ATP binding. Assembling and dissambling the active center during each catalytic cycle provides an effective means to prevent ATP hydrolysis.</text>
</comment>
<comment type="similarity">
    <text evidence="1">Belongs to the adenylate kinase family.</text>
</comment>